<organism>
    <name type="scientific">Protochlamydia amoebophila (strain UWE25)</name>
    <dbReference type="NCBI Taxonomy" id="264201"/>
    <lineage>
        <taxon>Bacteria</taxon>
        <taxon>Pseudomonadati</taxon>
        <taxon>Chlamydiota</taxon>
        <taxon>Chlamydiia</taxon>
        <taxon>Parachlamydiales</taxon>
        <taxon>Parachlamydiaceae</taxon>
        <taxon>Candidatus Protochlamydia</taxon>
    </lineage>
</organism>
<name>RS18_PARUW</name>
<keyword id="KW-1185">Reference proteome</keyword>
<keyword id="KW-0687">Ribonucleoprotein</keyword>
<keyword id="KW-0689">Ribosomal protein</keyword>
<keyword id="KW-0694">RNA-binding</keyword>
<keyword id="KW-0699">rRNA-binding</keyword>
<proteinExistence type="inferred from homology"/>
<feature type="chain" id="PRO_0000111200" description="Small ribosomal subunit protein bS18">
    <location>
        <begin position="1"/>
        <end position="86"/>
    </location>
</feature>
<gene>
    <name evidence="1" type="primary">rpsR</name>
    <name type="ordered locus">pc1591</name>
</gene>
<protein>
    <recommendedName>
        <fullName evidence="1">Small ribosomal subunit protein bS18</fullName>
    </recommendedName>
    <alternativeName>
        <fullName evidence="2">30S ribosomal protein S18</fullName>
    </alternativeName>
</protein>
<dbReference type="EMBL" id="BX908798">
    <property type="protein sequence ID" value="CAF24315.1"/>
    <property type="molecule type" value="Genomic_DNA"/>
</dbReference>
<dbReference type="RefSeq" id="WP_011176137.1">
    <property type="nucleotide sequence ID" value="NC_005861.2"/>
</dbReference>
<dbReference type="SMR" id="Q6MAT4"/>
<dbReference type="STRING" id="264201.pc1591"/>
<dbReference type="KEGG" id="pcu:PC_RS07620"/>
<dbReference type="eggNOG" id="COG0238">
    <property type="taxonomic scope" value="Bacteria"/>
</dbReference>
<dbReference type="HOGENOM" id="CLU_148710_0_0_0"/>
<dbReference type="OrthoDB" id="9812008at2"/>
<dbReference type="Proteomes" id="UP000000529">
    <property type="component" value="Chromosome"/>
</dbReference>
<dbReference type="GO" id="GO:0022627">
    <property type="term" value="C:cytosolic small ribosomal subunit"/>
    <property type="evidence" value="ECO:0007669"/>
    <property type="project" value="TreeGrafter"/>
</dbReference>
<dbReference type="GO" id="GO:0070181">
    <property type="term" value="F:small ribosomal subunit rRNA binding"/>
    <property type="evidence" value="ECO:0007669"/>
    <property type="project" value="TreeGrafter"/>
</dbReference>
<dbReference type="GO" id="GO:0003735">
    <property type="term" value="F:structural constituent of ribosome"/>
    <property type="evidence" value="ECO:0007669"/>
    <property type="project" value="InterPro"/>
</dbReference>
<dbReference type="GO" id="GO:0006412">
    <property type="term" value="P:translation"/>
    <property type="evidence" value="ECO:0007669"/>
    <property type="project" value="UniProtKB-UniRule"/>
</dbReference>
<dbReference type="Gene3D" id="4.10.640.10">
    <property type="entry name" value="Ribosomal protein S18"/>
    <property type="match status" value="1"/>
</dbReference>
<dbReference type="HAMAP" id="MF_00270">
    <property type="entry name" value="Ribosomal_bS18"/>
    <property type="match status" value="1"/>
</dbReference>
<dbReference type="InterPro" id="IPR001648">
    <property type="entry name" value="Ribosomal_bS18"/>
</dbReference>
<dbReference type="InterPro" id="IPR018275">
    <property type="entry name" value="Ribosomal_bS18_CS"/>
</dbReference>
<dbReference type="InterPro" id="IPR036870">
    <property type="entry name" value="Ribosomal_bS18_sf"/>
</dbReference>
<dbReference type="NCBIfam" id="TIGR00165">
    <property type="entry name" value="S18"/>
    <property type="match status" value="1"/>
</dbReference>
<dbReference type="PANTHER" id="PTHR13479">
    <property type="entry name" value="30S RIBOSOMAL PROTEIN S18"/>
    <property type="match status" value="1"/>
</dbReference>
<dbReference type="PANTHER" id="PTHR13479:SF40">
    <property type="entry name" value="SMALL RIBOSOMAL SUBUNIT PROTEIN BS18M"/>
    <property type="match status" value="1"/>
</dbReference>
<dbReference type="Pfam" id="PF01084">
    <property type="entry name" value="Ribosomal_S18"/>
    <property type="match status" value="1"/>
</dbReference>
<dbReference type="PRINTS" id="PR00974">
    <property type="entry name" value="RIBOSOMALS18"/>
</dbReference>
<dbReference type="SUPFAM" id="SSF46911">
    <property type="entry name" value="Ribosomal protein S18"/>
    <property type="match status" value="1"/>
</dbReference>
<dbReference type="PROSITE" id="PS00057">
    <property type="entry name" value="RIBOSOMAL_S18"/>
    <property type="match status" value="1"/>
</dbReference>
<evidence type="ECO:0000255" key="1">
    <source>
        <dbReference type="HAMAP-Rule" id="MF_00270"/>
    </source>
</evidence>
<evidence type="ECO:0000305" key="2"/>
<accession>Q6MAT4</accession>
<reference key="1">
    <citation type="journal article" date="2004" name="Science">
        <title>Illuminating the evolutionary history of chlamydiae.</title>
        <authorList>
            <person name="Horn M."/>
            <person name="Collingro A."/>
            <person name="Schmitz-Esser S."/>
            <person name="Beier C.L."/>
            <person name="Purkhold U."/>
            <person name="Fartmann B."/>
            <person name="Brandt P."/>
            <person name="Nyakatura G.J."/>
            <person name="Droege M."/>
            <person name="Frishman D."/>
            <person name="Rattei T."/>
            <person name="Mewes H.-W."/>
            <person name="Wagner M."/>
        </authorList>
    </citation>
    <scope>NUCLEOTIDE SEQUENCE [LARGE SCALE GENOMIC DNA]</scope>
    <source>
        <strain>UWE25</strain>
    </source>
</reference>
<comment type="function">
    <text evidence="1">Binds as a heterodimer with protein bS6 to the central domain of the 16S rRNA, where it helps stabilize the platform of the 30S subunit.</text>
</comment>
<comment type="subunit">
    <text evidence="1">Part of the 30S ribosomal subunit. Forms a tight heterodimer with protein bS6.</text>
</comment>
<comment type="similarity">
    <text evidence="1">Belongs to the bacterial ribosomal protein bS18 family.</text>
</comment>
<sequence length="86" mass="9948">MLQRKPKYNSDYSDARSKKRKRCPFTAAGIREIDYKDIDTLTKFITERGKILPRRITGVSAYHQKKLTAAIKRARHVALLPFVAEV</sequence>